<dbReference type="EMBL" id="CU468230">
    <property type="protein sequence ID" value="CAP01733.1"/>
    <property type="molecule type" value="Genomic_DNA"/>
</dbReference>
<dbReference type="SMR" id="B0VSR5"/>
<dbReference type="KEGG" id="abm:ABSDF2422"/>
<dbReference type="HOGENOM" id="CLU_094569_0_0_6"/>
<dbReference type="Proteomes" id="UP000001741">
    <property type="component" value="Chromosome"/>
</dbReference>
<dbReference type="GO" id="GO:0051539">
    <property type="term" value="F:4 iron, 4 sulfur cluster binding"/>
    <property type="evidence" value="ECO:0007669"/>
    <property type="project" value="UniProtKB-UniRule"/>
</dbReference>
<dbReference type="GO" id="GO:0005506">
    <property type="term" value="F:iron ion binding"/>
    <property type="evidence" value="ECO:0007669"/>
    <property type="project" value="InterPro"/>
</dbReference>
<dbReference type="GO" id="GO:0016226">
    <property type="term" value="P:iron-sulfur cluster assembly"/>
    <property type="evidence" value="ECO:0007669"/>
    <property type="project" value="UniProtKB-UniRule"/>
</dbReference>
<dbReference type="GO" id="GO:0051604">
    <property type="term" value="P:protein maturation"/>
    <property type="evidence" value="ECO:0007669"/>
    <property type="project" value="UniProtKB-UniRule"/>
</dbReference>
<dbReference type="Gene3D" id="3.30.300.130">
    <property type="entry name" value="Fe-S cluster assembly (FSCA)"/>
    <property type="match status" value="1"/>
</dbReference>
<dbReference type="Gene3D" id="2.60.300.12">
    <property type="entry name" value="HesB-like domain"/>
    <property type="match status" value="1"/>
</dbReference>
<dbReference type="HAMAP" id="MF_01637">
    <property type="entry name" value="Fe_S_biogen_NfuA"/>
    <property type="match status" value="1"/>
</dbReference>
<dbReference type="InterPro" id="IPR017726">
    <property type="entry name" value="Fe/S_biogenesis_protein_NfuA"/>
</dbReference>
<dbReference type="InterPro" id="IPR000361">
    <property type="entry name" value="FeS_biogenesis"/>
</dbReference>
<dbReference type="InterPro" id="IPR034904">
    <property type="entry name" value="FSCA_dom_sf"/>
</dbReference>
<dbReference type="InterPro" id="IPR035903">
    <property type="entry name" value="HesB-like_dom_sf"/>
</dbReference>
<dbReference type="InterPro" id="IPR001075">
    <property type="entry name" value="NIF_FeS_clus_asmbl_NifU_C"/>
</dbReference>
<dbReference type="NCBIfam" id="TIGR03341">
    <property type="entry name" value="YhgI_GntY"/>
    <property type="match status" value="1"/>
</dbReference>
<dbReference type="PANTHER" id="PTHR11178:SF51">
    <property type="entry name" value="FE_S BIOGENESIS PROTEIN NFUA"/>
    <property type="match status" value="1"/>
</dbReference>
<dbReference type="PANTHER" id="PTHR11178">
    <property type="entry name" value="IRON-SULFUR CLUSTER SCAFFOLD PROTEIN NFU-RELATED"/>
    <property type="match status" value="1"/>
</dbReference>
<dbReference type="Pfam" id="PF01521">
    <property type="entry name" value="Fe-S_biosyn"/>
    <property type="match status" value="1"/>
</dbReference>
<dbReference type="Pfam" id="PF01106">
    <property type="entry name" value="NifU"/>
    <property type="match status" value="1"/>
</dbReference>
<dbReference type="SUPFAM" id="SSF117916">
    <property type="entry name" value="Fe-S cluster assembly (FSCA) domain-like"/>
    <property type="match status" value="1"/>
</dbReference>
<dbReference type="SUPFAM" id="SSF89360">
    <property type="entry name" value="HesB-like domain"/>
    <property type="match status" value="1"/>
</dbReference>
<sequence length="212" mass="23116">MSTENTNTAVAEEIPNLLITPSAQEYLHELLAKQNTPGIGVRIFVEHPGTPRAECCMAYSAPEEVVPTDYKQDYPDFPAYIDAPSIPYLLDAVIDYNKDRFGGQLTFRAPNSKVPRVGPDASIEERITYVLQAEINPGLAGHGGNCSLVEVQDDPEHGLTAVLKFGGGCQGCSAIDVTLKQGVETTLKEHILELQRVVDQTDHTQAEGAYFK</sequence>
<gene>
    <name evidence="1" type="primary">nfuA</name>
    <name type="ordered locus">ABSDF2422</name>
</gene>
<reference key="1">
    <citation type="journal article" date="2008" name="PLoS ONE">
        <title>Comparative analysis of Acinetobacters: three genomes for three lifestyles.</title>
        <authorList>
            <person name="Vallenet D."/>
            <person name="Nordmann P."/>
            <person name="Barbe V."/>
            <person name="Poirel L."/>
            <person name="Mangenot S."/>
            <person name="Bataille E."/>
            <person name="Dossat C."/>
            <person name="Gas S."/>
            <person name="Kreimeyer A."/>
            <person name="Lenoble P."/>
            <person name="Oztas S."/>
            <person name="Poulain J."/>
            <person name="Segurens B."/>
            <person name="Robert C."/>
            <person name="Abergel C."/>
            <person name="Claverie J.-M."/>
            <person name="Raoult D."/>
            <person name="Medigue C."/>
            <person name="Weissenbach J."/>
            <person name="Cruveiller S."/>
        </authorList>
    </citation>
    <scope>NUCLEOTIDE SEQUENCE [LARGE SCALE GENOMIC DNA]</scope>
    <source>
        <strain>SDF</strain>
    </source>
</reference>
<protein>
    <recommendedName>
        <fullName evidence="1">Fe/S biogenesis protein NfuA</fullName>
    </recommendedName>
</protein>
<keyword id="KW-0004">4Fe-4S</keyword>
<keyword id="KW-0408">Iron</keyword>
<keyword id="KW-0411">Iron-sulfur</keyword>
<keyword id="KW-0479">Metal-binding</keyword>
<name>NFUA_ACIBS</name>
<accession>B0VSR5</accession>
<evidence type="ECO:0000255" key="1">
    <source>
        <dbReference type="HAMAP-Rule" id="MF_01637"/>
    </source>
</evidence>
<feature type="chain" id="PRO_1000186730" description="Fe/S biogenesis protein NfuA">
    <location>
        <begin position="1"/>
        <end position="212"/>
    </location>
</feature>
<feature type="binding site" evidence="1">
    <location>
        <position position="169"/>
    </location>
    <ligand>
        <name>[4Fe-4S] cluster</name>
        <dbReference type="ChEBI" id="CHEBI:49883"/>
    </ligand>
</feature>
<feature type="binding site" evidence="1">
    <location>
        <position position="172"/>
    </location>
    <ligand>
        <name>[4Fe-4S] cluster</name>
        <dbReference type="ChEBI" id="CHEBI:49883"/>
    </ligand>
</feature>
<proteinExistence type="inferred from homology"/>
<comment type="function">
    <text evidence="1">Involved in iron-sulfur cluster biogenesis. Binds a 4Fe-4S cluster, can transfer this cluster to apoproteins, and thereby intervenes in the maturation of Fe/S proteins. Could also act as a scaffold/chaperone for damaged Fe/S proteins.</text>
</comment>
<comment type="cofactor">
    <cofactor evidence="1">
        <name>[4Fe-4S] cluster</name>
        <dbReference type="ChEBI" id="CHEBI:49883"/>
    </cofactor>
    <text evidence="1">Binds 1 [4Fe-4S] cluster per subunit. The cluster is presumably bound at the interface of two monomers.</text>
</comment>
<comment type="subunit">
    <text evidence="1">Homodimer.</text>
</comment>
<comment type="similarity">
    <text evidence="1">Belongs to the NfuA family.</text>
</comment>
<organism>
    <name type="scientific">Acinetobacter baumannii (strain SDF)</name>
    <dbReference type="NCBI Taxonomy" id="509170"/>
    <lineage>
        <taxon>Bacteria</taxon>
        <taxon>Pseudomonadati</taxon>
        <taxon>Pseudomonadota</taxon>
        <taxon>Gammaproteobacteria</taxon>
        <taxon>Moraxellales</taxon>
        <taxon>Moraxellaceae</taxon>
        <taxon>Acinetobacter</taxon>
        <taxon>Acinetobacter calcoaceticus/baumannii complex</taxon>
    </lineage>
</organism>